<name>RPA1_MOUSE</name>
<accession>O35134</accession>
<accession>Q7TSA9</accession>
<sequence length="1717" mass="194110">MLASKHTPWRRLQGISFGMYSAEELKKLSVKSITNPRYVDYLGNPSANGLYDLALGPADSKEVCATCVQDFNNCSGHLGHIDLPLTVYNPFLFDKLYLLLRGSCLSCHMLTCPRAAIYLLISQLRVLEVGALQAVYELERILSRFLEETGDPSAFEIQEELEEYTSKILQNNLLGSQGTHVKNVCESRSKLVAQFWKTHMAAKQCPHCKTGRSVVRKEHNSKLIITYPATVHKKSDQEGTELPEGVPEAPGIDKAQMGKRGYLTPSSAQEHLFAIWKNEGFFLNYLFSGLDDIGPESSFNPSMFFLDFIVVPPSRYRPVNRLGDQMFTNGQTVNLQAVMKDAVLIRKLLALMAQEQKLPCEMTELTIDKENDSSVAIDRSFLGLLPGPSLTDKLYNIWIRLQSHVNIVFDSEMDKLMLEKYPGIRQILEKKEGLFRKHMMGKRVDYAARSVICPDMYINTNEIGIPMVFATKLTYPQPVTPWNVQELRQAVINGPNVHPGASMVINEDGSRTALSSVDAAQREAVAKQLLTPATGAPKPQGTKVVCRHVKNGDILLLNRQPTLHRPSIQAHRARILPEEKVLRLHYANCKAYNADFDGDEMNAHFPQSELGRAEAYVLACTDQQYLVPKDGQPLAGLIQDHMVSGANMTIRGCFFTREQYMELVYRGLTDKVGRVKLFPPAILKPFPLWTGKQVVSTLLINIIPEDYAPLNLSGKAKIGSKAWVKEKPRPIPDFDPDSMCESQVIIREGELLCGVLDKAHYGSSAYGLVHCCYEIYGGETSGRVLTCLARLFTAYLQLYRGFTLGVEDILVKPNADVVRQRIIEESTQCGPQAVKAALSLPETASCDEIQGKWQDAHLSKDQRDFNMIDMKFKEEVNHYSNEINKACMPLGLHRQFPENNLQMMVQSGAKGSTVNTMQISCLLGQIELEGRRPPLMASGKSLPCFEPYEFTPRAGGFVTGRFLTGIRPPEFFFHCMAGREGLVDTAVKTSRSGYLQRCIIKHLEGLVIQYDLTVRDSDGSVVQFLYGEDGLDIPKTQFLQPKQFPFLAGNYEVIMKSKHLHEVLSRADPQKVLGHIKAIKKWHHKHSGALLRKGAFLSFSQKIQAAVKALNLKGSIQNGRSPETQQMLQMWYDLDEESRWKYQKRAAPCPDPSLSVWRPDIYFASVSETFEKKIDDFSQEWAAQAERSYKKSELSLDRLRTLLQLKWQRSLCDPGEAVGLLAAQSIGEPSTQMTLNTFHFAGRGEMNVTLGIPRLREILMVASANIKTPMMSVPVFDTKKALKKVKSLKKRLTRVCLGEVLQKVDIQESFCMGEKRNKFQVYELRFQFLPHAYYQQEKCLRPEDILHFMETRFFKLLMEAIKKKKNKASAFRNVNSRRATQKDLNDTEDSGRSQREEERDEEEEGNIVDAEAEEGDADASDTKRKEKQEEEVDYESEEEGEEEEEEEVQEEGNIKGDGVHQGHEPDEEEHLGLEEEESSQKPPRRHSRPQGAEAIKRRIQAVRESYSFIEDYQYDTEESLWCQVTVKLPLMKINFDMSSLVVSLAHKAIVYTTKGITRCLLNETTNSKNEKELVLNTEGINLPELFKYSEILDLRRLYSNDIHAMANTYGIEAALRVIEKEIKDVFAVYGIAVDPRHLSLVADYMCFEGVYKPLNRFGIQSSSSPLQQMTFETSFQFLKQATMMGSHDELKSPSACLVVGKVVKGGTGLFELKQPLR</sequence>
<protein>
    <recommendedName>
        <fullName>DNA-directed RNA polymerase I subunit RPA1</fullName>
        <shortName>RNA polymerase I subunit A1</shortName>
        <ecNumber evidence="3">2.7.7.6</ecNumber>
    </recommendedName>
    <alternativeName>
        <fullName>DNA-directed RNA polymerase I largest subunit</fullName>
    </alternativeName>
    <alternativeName>
        <fullName>DNA-directed RNA polymerase I subunit A</fullName>
    </alternativeName>
    <alternativeName>
        <fullName>RNA polymerase I 194 kDa subunit</fullName>
        <shortName>RPA194</shortName>
    </alternativeName>
</protein>
<comment type="function">
    <text evidence="3 5 8">Catalytic core component of RNA polymerase I (Pol I), a DNA-dependent RNA polymerase which synthesizes ribosomal RNA precursors using the four ribonucleoside triphosphates as substrates. Transcribes 47S pre-rRNAs from multicopy rRNA gene clusters, giving rise to 5.8S, 18S and 28S ribosomal RNAs (By similarity). Pol I-mediated transcription cycle proceeds through transcription initiation, transcription elongation and transcription termination stages. During transcription initiation, Pol I pre-initiation complex (PIC) is recruited by the selectivity factor 1 (SL1/TIF-IB) complex bound to the core promoter that precedes an rDNA repeat unit. The PIC assembly bends the promoter favoring the formation of the transcription bubble and promoter escape. Once the polymerase has escaped from the promoter it enters the elongation phase during which RNA is actively polymerized, based on complementarity with the template DNA strand. Highly processive, assembles in structures referred to as 'Miller trees' where many elongating Pol I complexes queue and transcribe the same rDNA coding regions. At terminator sequences downstream of the rDNA gene, PTRF interacts with Pol I and halts Pol I transcription leading to the release of the RNA transcript and polymerase from the DNA (By similarity). Forms Pol I active center together with the second largest subunit POLR1B/RPA2. Appends one nucleotide at a time to the 3' end of the nascent RNA, with POLR1A/RPA1 contributing a Mg(2+)-coordinating DxDGD motif, and POLR1B/RPA2 participating in the coordination of a second Mg(2+) ion and providing lysine residues believed to facilitate Watson-Crick base pairing between the incoming nucleotide and the template base. Typically, Mg(2+) ions direct a 5' nucleoside triphosphate to form a phosphodiester bond with the 3' hydroxyl of the preceding nucleotide of the nascent RNA, with the elimination of pyrophosphate. Has proofreading activity: Pauses and backtracks to allow the cleavage of a missincorporated nucleotide via POLR1H/RPA12. High Pol I processivity is associated with decreased transcription fidelity (By similarity) (PubMed:10589839).</text>
</comment>
<comment type="catalytic activity">
    <reaction evidence="3 8">
        <text>RNA(n) + a ribonucleoside 5'-triphosphate = RNA(n+1) + diphosphate</text>
        <dbReference type="Rhea" id="RHEA:21248"/>
        <dbReference type="Rhea" id="RHEA-COMP:14527"/>
        <dbReference type="Rhea" id="RHEA-COMP:17342"/>
        <dbReference type="ChEBI" id="CHEBI:33019"/>
        <dbReference type="ChEBI" id="CHEBI:61557"/>
        <dbReference type="ChEBI" id="CHEBI:140395"/>
        <dbReference type="EC" id="2.7.7.6"/>
    </reaction>
    <physiologicalReaction direction="left-to-right" evidence="3 8">
        <dbReference type="Rhea" id="RHEA:21249"/>
    </physiologicalReaction>
</comment>
<comment type="cofactor">
    <cofactor evidence="3">
        <name>Mg(2+)</name>
        <dbReference type="ChEBI" id="CHEBI:18420"/>
    </cofactor>
    <text evidence="3">Two Mg(2+) ions are coordinated by both the catalytic residues and the nucleic acid substrate to enhance substrate recognition and catalytic efficiency.</text>
</comment>
<comment type="subunit">
    <text evidence="3 8 9">Component of the RNA polymerase I (Pol I) complex consisting of 13 subunits: a ten-subunit catalytic core composed of POLR1A/RPA1, POLR1B/RPA2, POLR1C/RPAC1, POLR1D/RPAC2, POLR1H/RPA12, POLR2E/RPABC1, POLR2F/RPABC2, POLR2H/RPABC3, POLR2K/RPABC4 and POLR2L/RPABC5; a mobile stalk subunit POLR1F/RPA43 protruding from the core and additional subunits homologous to general transcription factors POLR1E/RPA49 and POLR1G/RPA34. Part of Pol I pre-initiation complex (PIC), in which Pol I core assembles with RRN3 and promoter-bound UTBF and SL1/TIF-IB complex. Interacts (via dock II domain) with TOP2A; this interaction may assist Pol I transcription initiation by releasing supercoils occurring during DNA unwinding (By similarity). Interacts with CAVIN1; this interaction induces the dissociation of Pol I complex paused at rDNA terminator sequences (PubMed:10589839). Interacts with MYO1C (PubMed:16514417). Interacts with ERBB2. Interacts with DDX11. Interacts with RECQL5 (By similarity).</text>
</comment>
<comment type="subcellular location">
    <subcellularLocation>
        <location evidence="3">Nucleus</location>
        <location evidence="3">Nucleolus</location>
    </subcellularLocation>
    <subcellularLocation>
        <location evidence="10 11">Chromosome</location>
    </subcellularLocation>
</comment>
<comment type="domain">
    <text evidence="3">The clamps form the DNA-binding cleft.</text>
</comment>
<comment type="domain">
    <text evidence="2 3">The bridging helix crosses the cleft near the catalytic site and is thought to promote polymerase translocation by acting as a ratchet that moves the DNA-RNA hybrid through the active site.</text>
</comment>
<comment type="domain">
    <text evidence="2">The trigger loop allows entry of NTPs into the active site, switching between an open and closed state with each NTP addition cycle.</text>
</comment>
<comment type="domain">
    <text evidence="3">The funnel accommodates POLR1H/RPA12 favoring mismatched RNA cleavage upon backtracking.</text>
</comment>
<comment type="domain">
    <text evidence="3">The high mobility group-like domain (dock II; residues 1060-1155) binds TOP2A, but cannot bind DNA; may assist Pol I initiation by releasing supercoils occurring during DNA unwinding.</text>
</comment>
<comment type="PTM">
    <text evidence="1">Phosphorylated.</text>
</comment>
<comment type="disruption phenotype">
    <text evidence="12">Conditional knockdown results in craniofacial, cardiac and neurodevelopmental anomalies.</text>
</comment>
<comment type="similarity">
    <text evidence="13">Belongs to the RNA polymerase beta' chain family.</text>
</comment>
<dbReference type="EC" id="2.7.7.6" evidence="3"/>
<dbReference type="EMBL" id="AF000938">
    <property type="protein sequence ID" value="AAB66718.1"/>
    <property type="molecule type" value="mRNA"/>
</dbReference>
<dbReference type="EMBL" id="BC053744">
    <property type="protein sequence ID" value="AAH53744.1"/>
    <property type="molecule type" value="mRNA"/>
</dbReference>
<dbReference type="CCDS" id="CCDS20236.1"/>
<dbReference type="PIR" id="T13961">
    <property type="entry name" value="T13961"/>
</dbReference>
<dbReference type="RefSeq" id="NP_033114.3">
    <property type="nucleotide sequence ID" value="NM_009088.3"/>
</dbReference>
<dbReference type="SMR" id="O35134"/>
<dbReference type="BioGRID" id="202995">
    <property type="interactions" value="27"/>
</dbReference>
<dbReference type="FunCoup" id="O35134">
    <property type="interactions" value="3367"/>
</dbReference>
<dbReference type="IntAct" id="O35134">
    <property type="interactions" value="7"/>
</dbReference>
<dbReference type="MINT" id="O35134"/>
<dbReference type="STRING" id="10090.ENSMUSP00000060858"/>
<dbReference type="GlyGen" id="O35134">
    <property type="glycosylation" value="1 site"/>
</dbReference>
<dbReference type="iPTMnet" id="O35134"/>
<dbReference type="PhosphoSitePlus" id="O35134"/>
<dbReference type="PaxDb" id="10090-ENSMUSP00000060858"/>
<dbReference type="PeptideAtlas" id="O35134"/>
<dbReference type="ProteomicsDB" id="300512"/>
<dbReference type="Pumba" id="O35134"/>
<dbReference type="Antibodypedia" id="4117">
    <property type="antibodies" value="121 antibodies from 27 providers"/>
</dbReference>
<dbReference type="DNASU" id="20019"/>
<dbReference type="Ensembl" id="ENSMUST00000055296.11">
    <property type="protein sequence ID" value="ENSMUSP00000060858.9"/>
    <property type="gene ID" value="ENSMUSG00000049553.12"/>
</dbReference>
<dbReference type="GeneID" id="20019"/>
<dbReference type="KEGG" id="mmu:20019"/>
<dbReference type="UCSC" id="uc009chv.2">
    <property type="organism name" value="mouse"/>
</dbReference>
<dbReference type="AGR" id="MGI:1096397"/>
<dbReference type="CTD" id="25885"/>
<dbReference type="MGI" id="MGI:1096397">
    <property type="gene designation" value="Polr1a"/>
</dbReference>
<dbReference type="VEuPathDB" id="HostDB:ENSMUSG00000049553"/>
<dbReference type="eggNOG" id="KOG0262">
    <property type="taxonomic scope" value="Eukaryota"/>
</dbReference>
<dbReference type="GeneTree" id="ENSGT00920000149138"/>
<dbReference type="HOGENOM" id="CLU_000487_2_4_1"/>
<dbReference type="InParanoid" id="O35134"/>
<dbReference type="OMA" id="NREDYQQ"/>
<dbReference type="OrthoDB" id="270392at2759"/>
<dbReference type="PhylomeDB" id="O35134"/>
<dbReference type="TreeFam" id="TF103033"/>
<dbReference type="Reactome" id="R-MMU-5250924">
    <property type="pathway name" value="B-WICH complex positively regulates rRNA expression"/>
</dbReference>
<dbReference type="Reactome" id="R-MMU-73762">
    <property type="pathway name" value="RNA Polymerase I Transcription Initiation"/>
</dbReference>
<dbReference type="Reactome" id="R-MMU-73772">
    <property type="pathway name" value="RNA Polymerase I Promoter Escape"/>
</dbReference>
<dbReference type="Reactome" id="R-MMU-73863">
    <property type="pathway name" value="RNA Polymerase I Transcription Termination"/>
</dbReference>
<dbReference type="BioGRID-ORCS" id="20019">
    <property type="hits" value="26 hits in 80 CRISPR screens"/>
</dbReference>
<dbReference type="CD-CODE" id="8BEB9125">
    <property type="entry name" value="Cajal body"/>
</dbReference>
<dbReference type="ChiTaRS" id="Polr1a">
    <property type="organism name" value="mouse"/>
</dbReference>
<dbReference type="PRO" id="PR:O35134"/>
<dbReference type="Proteomes" id="UP000000589">
    <property type="component" value="Chromosome 6"/>
</dbReference>
<dbReference type="RNAct" id="O35134">
    <property type="molecule type" value="protein"/>
</dbReference>
<dbReference type="Bgee" id="ENSMUSG00000049553">
    <property type="expression patterns" value="Expressed in granulocyte and 258 other cell types or tissues"/>
</dbReference>
<dbReference type="ExpressionAtlas" id="O35134">
    <property type="expression patterns" value="baseline and differential"/>
</dbReference>
<dbReference type="GO" id="GO:0000785">
    <property type="term" value="C:chromatin"/>
    <property type="evidence" value="ECO:0007669"/>
    <property type="project" value="Ensembl"/>
</dbReference>
<dbReference type="GO" id="GO:0005694">
    <property type="term" value="C:chromosome"/>
    <property type="evidence" value="ECO:0000314"/>
    <property type="project" value="UniProtKB"/>
</dbReference>
<dbReference type="GO" id="GO:0005739">
    <property type="term" value="C:mitochondrion"/>
    <property type="evidence" value="ECO:0007669"/>
    <property type="project" value="GOC"/>
</dbReference>
<dbReference type="GO" id="GO:0005654">
    <property type="term" value="C:nucleoplasm"/>
    <property type="evidence" value="ECO:0000304"/>
    <property type="project" value="Reactome"/>
</dbReference>
<dbReference type="GO" id="GO:0005634">
    <property type="term" value="C:nucleus"/>
    <property type="evidence" value="ECO:0000314"/>
    <property type="project" value="MGI"/>
</dbReference>
<dbReference type="GO" id="GO:0005736">
    <property type="term" value="C:RNA polymerase I complex"/>
    <property type="evidence" value="ECO:0000314"/>
    <property type="project" value="MGI"/>
</dbReference>
<dbReference type="GO" id="GO:0003682">
    <property type="term" value="F:chromatin binding"/>
    <property type="evidence" value="ECO:0000250"/>
    <property type="project" value="UniProtKB"/>
</dbReference>
<dbReference type="GO" id="GO:0003677">
    <property type="term" value="F:DNA binding"/>
    <property type="evidence" value="ECO:0007669"/>
    <property type="project" value="InterPro"/>
</dbReference>
<dbReference type="GO" id="GO:0003899">
    <property type="term" value="F:DNA-directed RNA polymerase activity"/>
    <property type="evidence" value="ECO:0000250"/>
    <property type="project" value="UniProtKB"/>
</dbReference>
<dbReference type="GO" id="GO:0071667">
    <property type="term" value="F:DNA/RNA hybrid binding"/>
    <property type="evidence" value="ECO:0007669"/>
    <property type="project" value="Ensembl"/>
</dbReference>
<dbReference type="GO" id="GO:0000287">
    <property type="term" value="F:magnesium ion binding"/>
    <property type="evidence" value="ECO:0007669"/>
    <property type="project" value="Ensembl"/>
</dbReference>
<dbReference type="GO" id="GO:0008270">
    <property type="term" value="F:zinc ion binding"/>
    <property type="evidence" value="ECO:0007669"/>
    <property type="project" value="Ensembl"/>
</dbReference>
<dbReference type="GO" id="GO:1904750">
    <property type="term" value="P:negative regulation of protein localization to nucleolus"/>
    <property type="evidence" value="ECO:0007669"/>
    <property type="project" value="Ensembl"/>
</dbReference>
<dbReference type="GO" id="GO:0006360">
    <property type="term" value="P:transcription by RNA polymerase I"/>
    <property type="evidence" value="ECO:0007669"/>
    <property type="project" value="Ensembl"/>
</dbReference>
<dbReference type="CDD" id="cd02735">
    <property type="entry name" value="RNAP_I_Rpa1_C"/>
    <property type="match status" value="1"/>
</dbReference>
<dbReference type="CDD" id="cd01435">
    <property type="entry name" value="RNAP_I_RPA1_N"/>
    <property type="match status" value="1"/>
</dbReference>
<dbReference type="FunFam" id="2.40.40.20:FF:000019">
    <property type="entry name" value="DNA-directed RNA polymerase II subunit RPB1"/>
    <property type="match status" value="1"/>
</dbReference>
<dbReference type="FunFam" id="1.10.132.30:FF:000004">
    <property type="entry name" value="DNA-directed RNA polymerase subunit"/>
    <property type="match status" value="1"/>
</dbReference>
<dbReference type="FunFam" id="1.10.274.100:FF:000004">
    <property type="entry name" value="DNA-directed RNA polymerase subunit"/>
    <property type="match status" value="1"/>
</dbReference>
<dbReference type="FunFam" id="3.30.1490.180:FF:000003">
    <property type="entry name" value="DNA-directed RNA polymerase subunit"/>
    <property type="match status" value="1"/>
</dbReference>
<dbReference type="FunFam" id="4.10.860.120:FF:000006">
    <property type="entry name" value="DNA-directed RNA polymerase subunit"/>
    <property type="match status" value="1"/>
</dbReference>
<dbReference type="Gene3D" id="1.10.132.30">
    <property type="match status" value="1"/>
</dbReference>
<dbReference type="Gene3D" id="1.10.357.120">
    <property type="match status" value="1"/>
</dbReference>
<dbReference type="Gene3D" id="2.40.40.20">
    <property type="match status" value="1"/>
</dbReference>
<dbReference type="Gene3D" id="3.30.70.2850">
    <property type="match status" value="1"/>
</dbReference>
<dbReference type="Gene3D" id="6.10.250.2940">
    <property type="match status" value="1"/>
</dbReference>
<dbReference type="Gene3D" id="3.30.1490.180">
    <property type="entry name" value="RNA polymerase ii"/>
    <property type="match status" value="1"/>
</dbReference>
<dbReference type="Gene3D" id="4.10.860.120">
    <property type="entry name" value="RNA polymerase II, clamp domain"/>
    <property type="match status" value="1"/>
</dbReference>
<dbReference type="Gene3D" id="1.10.274.100">
    <property type="entry name" value="RNA polymerase Rpb1, domain 3"/>
    <property type="match status" value="1"/>
</dbReference>
<dbReference type="InterPro" id="IPR047107">
    <property type="entry name" value="DNA-dir_RNA_pol1_lsu_C"/>
</dbReference>
<dbReference type="InterPro" id="IPR015699">
    <property type="entry name" value="DNA-dir_RNA_pol1_lsu_N"/>
</dbReference>
<dbReference type="InterPro" id="IPR045867">
    <property type="entry name" value="DNA-dir_RpoC_beta_prime"/>
</dbReference>
<dbReference type="InterPro" id="IPR000722">
    <property type="entry name" value="RNA_pol_asu"/>
</dbReference>
<dbReference type="InterPro" id="IPR006592">
    <property type="entry name" value="RNA_pol_N"/>
</dbReference>
<dbReference type="InterPro" id="IPR007080">
    <property type="entry name" value="RNA_pol_Rpb1_1"/>
</dbReference>
<dbReference type="InterPro" id="IPR007066">
    <property type="entry name" value="RNA_pol_Rpb1_3"/>
</dbReference>
<dbReference type="InterPro" id="IPR042102">
    <property type="entry name" value="RNA_pol_Rpb1_3_sf"/>
</dbReference>
<dbReference type="InterPro" id="IPR007083">
    <property type="entry name" value="RNA_pol_Rpb1_4"/>
</dbReference>
<dbReference type="InterPro" id="IPR007081">
    <property type="entry name" value="RNA_pol_Rpb1_5"/>
</dbReference>
<dbReference type="InterPro" id="IPR044893">
    <property type="entry name" value="RNA_pol_Rpb1_clamp_domain"/>
</dbReference>
<dbReference type="InterPro" id="IPR038120">
    <property type="entry name" value="Rpb1_funnel_sf"/>
</dbReference>
<dbReference type="PANTHER" id="PTHR19376">
    <property type="entry name" value="DNA-DIRECTED RNA POLYMERASE"/>
    <property type="match status" value="1"/>
</dbReference>
<dbReference type="PANTHER" id="PTHR19376:SF11">
    <property type="entry name" value="DNA-DIRECTED RNA POLYMERASE I SUBUNIT RPA1"/>
    <property type="match status" value="1"/>
</dbReference>
<dbReference type="Pfam" id="PF04997">
    <property type="entry name" value="RNA_pol_Rpb1_1"/>
    <property type="match status" value="1"/>
</dbReference>
<dbReference type="Pfam" id="PF00623">
    <property type="entry name" value="RNA_pol_Rpb1_2"/>
    <property type="match status" value="1"/>
</dbReference>
<dbReference type="Pfam" id="PF04983">
    <property type="entry name" value="RNA_pol_Rpb1_3"/>
    <property type="match status" value="1"/>
</dbReference>
<dbReference type="Pfam" id="PF05000">
    <property type="entry name" value="RNA_pol_Rpb1_4"/>
    <property type="match status" value="1"/>
</dbReference>
<dbReference type="Pfam" id="PF04998">
    <property type="entry name" value="RNA_pol_Rpb1_5"/>
    <property type="match status" value="1"/>
</dbReference>
<dbReference type="SMART" id="SM00663">
    <property type="entry name" value="RPOLA_N"/>
    <property type="match status" value="1"/>
</dbReference>
<dbReference type="SUPFAM" id="SSF64484">
    <property type="entry name" value="beta and beta-prime subunits of DNA dependent RNA-polymerase"/>
    <property type="match status" value="1"/>
</dbReference>
<reference key="1">
    <citation type="journal article" date="1997" name="Mol. Gen. Genet.">
        <title>Molecular cloning and characterization of the cDNA encoding the largest subunit of mouse RNA polymerase I.</title>
        <authorList>
            <person name="Seither P."/>
            <person name="Coy J.F."/>
            <person name="Pouska A."/>
            <person name="Grummt I."/>
        </authorList>
    </citation>
    <scope>NUCLEOTIDE SEQUENCE [MRNA]</scope>
</reference>
<reference key="2">
    <citation type="journal article" date="2004" name="Genome Res.">
        <title>The status, quality, and expansion of the NIH full-length cDNA project: the Mammalian Gene Collection (MGC).</title>
        <authorList>
            <consortium name="The MGC Project Team"/>
        </authorList>
    </citation>
    <scope>NUCLEOTIDE SEQUENCE [LARGE SCALE MRNA]</scope>
    <source>
        <tissue>Limb</tissue>
    </source>
</reference>
<reference key="3">
    <citation type="journal article" date="1999" name="Mol. Gen. Genet.">
        <title>Mechanism of transcription termination: PTRF interacts with the largest subunit of RNA polymerase I and dissociates paused transcription complexes from yeast and mouse.</title>
        <authorList>
            <person name="Jansa P."/>
            <person name="Grummt I."/>
        </authorList>
    </citation>
    <scope>FUNCTION</scope>
    <scope>CATALYTIC ACTIVITY</scope>
    <scope>SUBUNIT</scope>
    <scope>INTERACTION WITH CAVIN1</scope>
</reference>
<reference key="4">
    <citation type="journal article" date="2006" name="EMBO Rep.">
        <title>The chromatin remodelling complex WSTF-SNF2h interacts with nuclear myosin 1 and has a role in RNA polymerase I transcription.</title>
        <authorList>
            <person name="Percipalle P."/>
            <person name="Fomproix N."/>
            <person name="Cavellan E."/>
            <person name="Voit R."/>
            <person name="Reimer G."/>
            <person name="Krueger T."/>
            <person name="Thyberg J."/>
            <person name="Scheer U."/>
            <person name="Grummt I."/>
            <person name="Oestlund Farrants A.-K.O."/>
        </authorList>
    </citation>
    <scope>INTERACTION WITH MYO1C</scope>
</reference>
<reference key="5">
    <citation type="journal article" date="2010" name="Cell">
        <title>A tissue-specific atlas of mouse protein phosphorylation and expression.</title>
        <authorList>
            <person name="Huttlin E.L."/>
            <person name="Jedrychowski M.P."/>
            <person name="Elias J.E."/>
            <person name="Goswami T."/>
            <person name="Rad R."/>
            <person name="Beausoleil S.A."/>
            <person name="Villen J."/>
            <person name="Haas W."/>
            <person name="Sowa M.E."/>
            <person name="Gygi S.P."/>
        </authorList>
    </citation>
    <scope>IDENTIFICATION BY MASS SPECTROMETRY [LARGE SCALE ANALYSIS]</scope>
    <source>
        <tissue>Pancreas</tissue>
        <tissue>Spleen</tissue>
        <tissue>Testis</tissue>
    </source>
</reference>
<reference key="6">
    <citation type="journal article" date="2018" name="Commun. Biol.">
        <title>Evolutionarily-conserved MZIP2 is essential for crossover formation in mammalian meiosis.</title>
        <authorList>
            <person name="Zhang Q."/>
            <person name="Shao J."/>
            <person name="Fan H.Y."/>
            <person name="Yu C."/>
        </authorList>
    </citation>
    <scope>SUBCELLULAR LOCATION</scope>
</reference>
<reference key="7">
    <citation type="journal article" date="2019" name="Sci. Adv.">
        <title>SPO16 binds SHOC1 to promote homologous recombination and crossing-over in meiotic prophase I.</title>
        <authorList>
            <person name="Zhang Q."/>
            <person name="Ji S.Y."/>
            <person name="Busayavalasa K."/>
            <person name="Yu C."/>
        </authorList>
    </citation>
    <scope>SUBCELLULAR LOCATION</scope>
</reference>
<reference key="8">
    <citation type="journal article" date="2023" name="Am. J. Hum. Genet.">
        <title>POLR1A variants underlie phenotypic heterogeneity in craniofacial, neural, and cardiac anomalies.</title>
        <authorList>
            <person name="Smallwood K."/>
            <person name="Watt K.E.N."/>
            <person name="Ide S."/>
            <person name="Baltrunaite K."/>
            <person name="Brunswick C."/>
            <person name="Inskeep K."/>
            <person name="Capannari C."/>
            <person name="Adam M.P."/>
            <person name="Begtrup A."/>
            <person name="Bertola D.R."/>
            <person name="Demmer L."/>
            <person name="Demo E."/>
            <person name="Devinsky O."/>
            <person name="Gallagher E.R."/>
            <person name="Guillen Sacoto M.J."/>
            <person name="Jech R."/>
            <person name="Keren B."/>
            <person name="Kussmann J."/>
            <person name="Ladda R."/>
            <person name="Lansdon L.A."/>
            <person name="Lunke S."/>
            <person name="Mardy A."/>
            <person name="McWalters K."/>
            <person name="Person R."/>
            <person name="Raiti L."/>
            <person name="Saitoh N."/>
            <person name="Saunders C.J."/>
            <person name="Schnur R."/>
            <person name="Skorvanek M."/>
            <person name="Sell S.L."/>
            <person name="Slavotinek A."/>
            <person name="Sullivan B.R."/>
            <person name="Stark Z."/>
            <person name="Symonds J.D."/>
            <person name="Wenger T."/>
            <person name="Weber S."/>
            <person name="Whalen S."/>
            <person name="White S.M."/>
            <person name="Winkelmann J."/>
            <person name="Zech M."/>
            <person name="Zeidler S."/>
            <person name="Maeshima K."/>
            <person name="Stottmann R.W."/>
            <person name="Trainor P.A."/>
            <person name="Weaver K.N."/>
        </authorList>
    </citation>
    <scope>DISRUPTION PHENOTYPE</scope>
    <scope>MUTAGENESIS OF CYS-1559</scope>
</reference>
<proteinExistence type="evidence at protein level"/>
<organism>
    <name type="scientific">Mus musculus</name>
    <name type="common">Mouse</name>
    <dbReference type="NCBI Taxonomy" id="10090"/>
    <lineage>
        <taxon>Eukaryota</taxon>
        <taxon>Metazoa</taxon>
        <taxon>Chordata</taxon>
        <taxon>Craniata</taxon>
        <taxon>Vertebrata</taxon>
        <taxon>Euteleostomi</taxon>
        <taxon>Mammalia</taxon>
        <taxon>Eutheria</taxon>
        <taxon>Euarchontoglires</taxon>
        <taxon>Glires</taxon>
        <taxon>Rodentia</taxon>
        <taxon>Myomorpha</taxon>
        <taxon>Muroidea</taxon>
        <taxon>Muridae</taxon>
        <taxon>Murinae</taxon>
        <taxon>Mus</taxon>
        <taxon>Mus</taxon>
    </lineage>
</organism>
<feature type="chain" id="PRO_0000073924" description="DNA-directed RNA polymerase I subunit RPA1">
    <location>
        <begin position="1"/>
        <end position="1717"/>
    </location>
</feature>
<feature type="region of interest" description="Clamp" evidence="3">
    <location>
        <begin position="110"/>
        <end position="201"/>
    </location>
</feature>
<feature type="region of interest" description="Clamp" evidence="3">
    <location>
        <begin position="327"/>
        <end position="433"/>
    </location>
</feature>
<feature type="region of interest" description="Rudder" evidence="3">
    <location>
        <begin position="410"/>
        <end position="423"/>
    </location>
</feature>
<feature type="region of interest" description="Involved in RRN3 binding to Pol I complex" evidence="3">
    <location>
        <begin position="475"/>
        <end position="549"/>
    </location>
</feature>
<feature type="region of interest" description="Funnel" evidence="3">
    <location>
        <begin position="812"/>
        <end position="890"/>
    </location>
</feature>
<feature type="region of interest" description="Bridging helix" evidence="2 3">
    <location>
        <begin position="967"/>
        <end position="1008"/>
    </location>
</feature>
<feature type="region of interest" description="Mediates the interaction with TOP2A" evidence="3">
    <location>
        <begin position="1067"/>
        <end position="1162"/>
    </location>
</feature>
<feature type="region of interest" description="Trigger loop" evidence="2">
    <location>
        <begin position="1214"/>
        <end position="1255"/>
    </location>
</feature>
<feature type="region of interest" description="Disordered" evidence="7">
    <location>
        <begin position="1372"/>
        <end position="1493"/>
    </location>
</feature>
<feature type="compositionally biased region" description="Basic and acidic residues" evidence="7">
    <location>
        <begin position="1380"/>
        <end position="1397"/>
    </location>
</feature>
<feature type="compositionally biased region" description="Acidic residues" evidence="7">
    <location>
        <begin position="1398"/>
        <end position="1419"/>
    </location>
</feature>
<feature type="compositionally biased region" description="Acidic residues" evidence="7">
    <location>
        <begin position="1429"/>
        <end position="1450"/>
    </location>
</feature>
<feature type="compositionally biased region" description="Basic and acidic residues" evidence="7">
    <location>
        <begin position="1452"/>
        <end position="1464"/>
    </location>
</feature>
<feature type="compositionally biased region" description="Acidic residues" evidence="7">
    <location>
        <begin position="1465"/>
        <end position="1477"/>
    </location>
</feature>
<feature type="binding site" evidence="3">
    <location>
        <position position="64"/>
    </location>
    <ligand>
        <name>Zn(2+)</name>
        <dbReference type="ChEBI" id="CHEBI:29105"/>
        <label>1</label>
    </ligand>
</feature>
<feature type="binding site" evidence="3">
    <location>
        <position position="67"/>
    </location>
    <ligand>
        <name>Zn(2+)</name>
        <dbReference type="ChEBI" id="CHEBI:29105"/>
        <label>1</label>
    </ligand>
</feature>
<feature type="binding site" evidence="3">
    <location>
        <position position="74"/>
    </location>
    <ligand>
        <name>Zn(2+)</name>
        <dbReference type="ChEBI" id="CHEBI:29105"/>
        <label>1</label>
    </ligand>
</feature>
<feature type="binding site" evidence="3">
    <location>
        <position position="77"/>
    </location>
    <ligand>
        <name>Zn(2+)</name>
        <dbReference type="ChEBI" id="CHEBI:29105"/>
        <label>1</label>
    </ligand>
</feature>
<feature type="binding site" evidence="3">
    <location>
        <position position="104"/>
    </location>
    <ligand>
        <name>Zn(2+)</name>
        <dbReference type="ChEBI" id="CHEBI:29105"/>
        <label>2</label>
    </ligand>
</feature>
<feature type="binding site" evidence="3">
    <location>
        <position position="107"/>
    </location>
    <ligand>
        <name>Zn(2+)</name>
        <dbReference type="ChEBI" id="CHEBI:29105"/>
        <label>2</label>
    </ligand>
</feature>
<feature type="binding site" evidence="3">
    <location>
        <position position="205"/>
    </location>
    <ligand>
        <name>Zn(2+)</name>
        <dbReference type="ChEBI" id="CHEBI:29105"/>
        <label>2</label>
    </ligand>
</feature>
<feature type="binding site" evidence="3">
    <location>
        <position position="208"/>
    </location>
    <ligand>
        <name>Zn(2+)</name>
        <dbReference type="ChEBI" id="CHEBI:29105"/>
        <label>2</label>
    </ligand>
</feature>
<feature type="binding site" evidence="3">
    <location>
        <position position="431"/>
    </location>
    <ligand>
        <name>DNA</name>
        <dbReference type="ChEBI" id="CHEBI:16991"/>
        <label>template strand</label>
    </ligand>
</feature>
<feature type="binding site" evidence="3">
    <location>
        <position position="436"/>
    </location>
    <ligand>
        <name>DNA</name>
        <dbReference type="ChEBI" id="CHEBI:16991"/>
        <label>nontemplate strand</label>
    </ligand>
</feature>
<feature type="binding site" evidence="3">
    <location>
        <position position="436"/>
    </location>
    <ligand>
        <name>DNA</name>
        <dbReference type="ChEBI" id="CHEBI:16991"/>
        <label>template strand</label>
    </ligand>
</feature>
<feature type="binding site" evidence="3">
    <location>
        <position position="443"/>
    </location>
    <ligand>
        <name>DNA</name>
        <dbReference type="ChEBI" id="CHEBI:16991"/>
        <label>template strand</label>
    </ligand>
</feature>
<feature type="binding site" evidence="3">
    <location>
        <position position="559"/>
    </location>
    <ligand>
        <name>RNA</name>
        <dbReference type="ChEBI" id="CHEBI:33697"/>
    </ligand>
</feature>
<feature type="binding site" evidence="3">
    <location>
        <position position="595"/>
    </location>
    <ligand>
        <name>Mg(2+)</name>
        <dbReference type="ChEBI" id="CHEBI:18420"/>
        <label>1</label>
        <note>catalytic</note>
    </ligand>
</feature>
<feature type="binding site" evidence="6">
    <location>
        <position position="595"/>
    </location>
    <ligand>
        <name>Mg(2+)</name>
        <dbReference type="ChEBI" id="CHEBI:18420"/>
        <label>2</label>
        <note>ligand shared with POLR1B/RPA2</note>
    </ligand>
</feature>
<feature type="binding site" evidence="3">
    <location>
        <position position="597"/>
    </location>
    <ligand>
        <name>Mg(2+)</name>
        <dbReference type="ChEBI" id="CHEBI:18420"/>
        <label>1</label>
        <note>catalytic</note>
    </ligand>
</feature>
<feature type="binding site" evidence="4">
    <location>
        <position position="597"/>
    </location>
    <ligand>
        <name>Mg(2+)</name>
        <dbReference type="ChEBI" id="CHEBI:18420"/>
        <label>2</label>
        <note>ligand shared with POLR1B/RPA2</note>
    </ligand>
</feature>
<feature type="binding site" evidence="3">
    <location>
        <position position="599"/>
    </location>
    <ligand>
        <name>Mg(2+)</name>
        <dbReference type="ChEBI" id="CHEBI:18420"/>
        <label>1</label>
        <note>catalytic</note>
    </ligand>
</feature>
<feature type="binding site" evidence="3">
    <location>
        <position position="599"/>
    </location>
    <ligand>
        <name>RNA</name>
        <dbReference type="ChEBI" id="CHEBI:33697"/>
    </ligand>
</feature>
<feature type="binding site" evidence="3">
    <location>
        <position position="1256"/>
    </location>
    <ligand>
        <name>DNA</name>
        <dbReference type="ChEBI" id="CHEBI:16991"/>
        <label>template strand</label>
    </ligand>
</feature>
<feature type="site" description="NTP recognition and base pairing" evidence="3">
    <location>
        <position position="561"/>
    </location>
</feature>
<feature type="site" description="NTP recognition and base pairing" evidence="3">
    <location>
        <position position="805"/>
    </location>
</feature>
<feature type="modified residue" description="Phosphoserine" evidence="3">
    <location>
        <position position="1393"/>
    </location>
</feature>
<feature type="mutagenesis site" description="Embryonic lethal at homozygosity." evidence="12">
    <original>C</original>
    <variation>F</variation>
    <location>
        <position position="1559"/>
    </location>
</feature>
<feature type="sequence conflict" description="In Ref. 2; AAH53744." evidence="13" ref="2">
    <original>R</original>
    <variation>H</variation>
    <location>
        <position position="821"/>
    </location>
</feature>
<feature type="sequence conflict" description="In Ref. 1; AAB66718." evidence="13" ref="1">
    <original>M</original>
    <variation>T</variation>
    <location>
        <position position="1246"/>
    </location>
</feature>
<keyword id="KW-0158">Chromosome</keyword>
<keyword id="KW-0240">DNA-directed RNA polymerase</keyword>
<keyword id="KW-0460">Magnesium</keyword>
<keyword id="KW-0479">Metal-binding</keyword>
<keyword id="KW-0548">Nucleotidyltransferase</keyword>
<keyword id="KW-0539">Nucleus</keyword>
<keyword id="KW-0597">Phosphoprotein</keyword>
<keyword id="KW-1185">Reference proteome</keyword>
<keyword id="KW-0804">Transcription</keyword>
<keyword id="KW-0808">Transferase</keyword>
<keyword id="KW-0862">Zinc</keyword>
<gene>
    <name evidence="14" type="primary">Polr1a</name>
    <name type="synonym">Rpa1</name>
    <name type="synonym">Rpo1-4</name>
</gene>
<evidence type="ECO:0000250" key="1"/>
<evidence type="ECO:0000250" key="2">
    <source>
        <dbReference type="UniProtKB" id="G3MZY8"/>
    </source>
</evidence>
<evidence type="ECO:0000250" key="3">
    <source>
        <dbReference type="UniProtKB" id="O95602"/>
    </source>
</evidence>
<evidence type="ECO:0000250" key="4">
    <source>
        <dbReference type="UniProtKB" id="P04050"/>
    </source>
</evidence>
<evidence type="ECO:0000250" key="5">
    <source>
        <dbReference type="UniProtKB" id="P10964"/>
    </source>
</evidence>
<evidence type="ECO:0000250" key="6">
    <source>
        <dbReference type="UniProtKB" id="P24928"/>
    </source>
</evidence>
<evidence type="ECO:0000256" key="7">
    <source>
        <dbReference type="SAM" id="MobiDB-lite"/>
    </source>
</evidence>
<evidence type="ECO:0000269" key="8">
    <source>
    </source>
</evidence>
<evidence type="ECO:0000269" key="9">
    <source>
    </source>
</evidence>
<evidence type="ECO:0000269" key="10">
    <source>
    </source>
</evidence>
<evidence type="ECO:0000269" key="11">
    <source>
    </source>
</evidence>
<evidence type="ECO:0000269" key="12">
    <source>
    </source>
</evidence>
<evidence type="ECO:0000305" key="13"/>
<evidence type="ECO:0000312" key="14">
    <source>
        <dbReference type="MGI" id="MGI:1096397"/>
    </source>
</evidence>